<dbReference type="EC" id="1.97.1.12" evidence="2"/>
<dbReference type="EMBL" id="CP000554">
    <property type="protein sequence ID" value="ABM79335.1"/>
    <property type="molecule type" value="Genomic_DNA"/>
</dbReference>
<dbReference type="RefSeq" id="WP_011827179.1">
    <property type="nucleotide sequence ID" value="NC_008820.1"/>
</dbReference>
<dbReference type="SMR" id="A2CCX5"/>
<dbReference type="STRING" id="59922.P9303_26051"/>
<dbReference type="KEGG" id="pmf:P9303_26051"/>
<dbReference type="HOGENOM" id="CLU_139698_8_0_3"/>
<dbReference type="BioCyc" id="PMAR59922:G1G80-2281-MONOMER"/>
<dbReference type="Proteomes" id="UP000002274">
    <property type="component" value="Chromosome"/>
</dbReference>
<dbReference type="GO" id="GO:0009522">
    <property type="term" value="C:photosystem I"/>
    <property type="evidence" value="ECO:0007669"/>
    <property type="project" value="UniProtKB-KW"/>
</dbReference>
<dbReference type="GO" id="GO:0031676">
    <property type="term" value="C:plasma membrane-derived thylakoid membrane"/>
    <property type="evidence" value="ECO:0007669"/>
    <property type="project" value="UniProtKB-SubCell"/>
</dbReference>
<dbReference type="GO" id="GO:0051539">
    <property type="term" value="F:4 iron, 4 sulfur cluster binding"/>
    <property type="evidence" value="ECO:0007669"/>
    <property type="project" value="UniProtKB-KW"/>
</dbReference>
<dbReference type="GO" id="GO:0009055">
    <property type="term" value="F:electron transfer activity"/>
    <property type="evidence" value="ECO:0007669"/>
    <property type="project" value="UniProtKB-UniRule"/>
</dbReference>
<dbReference type="GO" id="GO:0046872">
    <property type="term" value="F:metal ion binding"/>
    <property type="evidence" value="ECO:0007669"/>
    <property type="project" value="UniProtKB-KW"/>
</dbReference>
<dbReference type="GO" id="GO:0016491">
    <property type="term" value="F:oxidoreductase activity"/>
    <property type="evidence" value="ECO:0007669"/>
    <property type="project" value="UniProtKB-KW"/>
</dbReference>
<dbReference type="GO" id="GO:0009773">
    <property type="term" value="P:photosynthetic electron transport in photosystem I"/>
    <property type="evidence" value="ECO:0007669"/>
    <property type="project" value="InterPro"/>
</dbReference>
<dbReference type="FunFam" id="3.30.70.20:FF:000001">
    <property type="entry name" value="Photosystem I iron-sulfur center"/>
    <property type="match status" value="1"/>
</dbReference>
<dbReference type="Gene3D" id="3.30.70.20">
    <property type="match status" value="1"/>
</dbReference>
<dbReference type="HAMAP" id="MF_01303">
    <property type="entry name" value="PSI_PsaC"/>
    <property type="match status" value="1"/>
</dbReference>
<dbReference type="InterPro" id="IPR017896">
    <property type="entry name" value="4Fe4S_Fe-S-bd"/>
</dbReference>
<dbReference type="InterPro" id="IPR017900">
    <property type="entry name" value="4Fe4S_Fe_S_CS"/>
</dbReference>
<dbReference type="InterPro" id="IPR050157">
    <property type="entry name" value="PSI_iron-sulfur_center"/>
</dbReference>
<dbReference type="InterPro" id="IPR017491">
    <property type="entry name" value="PSI_PsaC"/>
</dbReference>
<dbReference type="NCBIfam" id="TIGR03048">
    <property type="entry name" value="PS_I_psaC"/>
    <property type="match status" value="1"/>
</dbReference>
<dbReference type="PANTHER" id="PTHR24960:SF79">
    <property type="entry name" value="PHOTOSYSTEM I IRON-SULFUR CENTER"/>
    <property type="match status" value="1"/>
</dbReference>
<dbReference type="PANTHER" id="PTHR24960">
    <property type="entry name" value="PHOTOSYSTEM I IRON-SULFUR CENTER-RELATED"/>
    <property type="match status" value="1"/>
</dbReference>
<dbReference type="Pfam" id="PF12838">
    <property type="entry name" value="Fer4_7"/>
    <property type="match status" value="1"/>
</dbReference>
<dbReference type="SUPFAM" id="SSF54862">
    <property type="entry name" value="4Fe-4S ferredoxins"/>
    <property type="match status" value="1"/>
</dbReference>
<dbReference type="PROSITE" id="PS00198">
    <property type="entry name" value="4FE4S_FER_1"/>
    <property type="match status" value="2"/>
</dbReference>
<dbReference type="PROSITE" id="PS51379">
    <property type="entry name" value="4FE4S_FER_2"/>
    <property type="match status" value="2"/>
</dbReference>
<proteinExistence type="inferred from homology"/>
<keyword id="KW-0004">4Fe-4S</keyword>
<keyword id="KW-0249">Electron transport</keyword>
<keyword id="KW-0408">Iron</keyword>
<keyword id="KW-0411">Iron-sulfur</keyword>
<keyword id="KW-0472">Membrane</keyword>
<keyword id="KW-0479">Metal-binding</keyword>
<keyword id="KW-0560">Oxidoreductase</keyword>
<keyword id="KW-0602">Photosynthesis</keyword>
<keyword id="KW-0603">Photosystem I</keyword>
<keyword id="KW-0677">Repeat</keyword>
<keyword id="KW-0793">Thylakoid</keyword>
<keyword id="KW-0813">Transport</keyword>
<feature type="initiator methionine" description="Removed" evidence="1">
    <location>
        <position position="1"/>
    </location>
</feature>
<feature type="chain" id="PRO_0000292099" description="Photosystem I iron-sulfur center">
    <location>
        <begin position="2"/>
        <end position="81"/>
    </location>
</feature>
<feature type="domain" description="4Fe-4S ferredoxin-type 1" evidence="2">
    <location>
        <begin position="2"/>
        <end position="31"/>
    </location>
</feature>
<feature type="domain" description="4Fe-4S ferredoxin-type 2" evidence="2">
    <location>
        <begin position="39"/>
        <end position="68"/>
    </location>
</feature>
<feature type="binding site" evidence="2">
    <location>
        <position position="11"/>
    </location>
    <ligand>
        <name>[4Fe-4S] cluster</name>
        <dbReference type="ChEBI" id="CHEBI:49883"/>
        <label>1</label>
    </ligand>
</feature>
<feature type="binding site" evidence="2">
    <location>
        <position position="14"/>
    </location>
    <ligand>
        <name>[4Fe-4S] cluster</name>
        <dbReference type="ChEBI" id="CHEBI:49883"/>
        <label>1</label>
    </ligand>
</feature>
<feature type="binding site" evidence="2">
    <location>
        <position position="17"/>
    </location>
    <ligand>
        <name>[4Fe-4S] cluster</name>
        <dbReference type="ChEBI" id="CHEBI:49883"/>
        <label>1</label>
    </ligand>
</feature>
<feature type="binding site" evidence="2">
    <location>
        <position position="21"/>
    </location>
    <ligand>
        <name>[4Fe-4S] cluster</name>
        <dbReference type="ChEBI" id="CHEBI:49883"/>
        <label>2</label>
    </ligand>
</feature>
<feature type="binding site" evidence="2">
    <location>
        <position position="48"/>
    </location>
    <ligand>
        <name>[4Fe-4S] cluster</name>
        <dbReference type="ChEBI" id="CHEBI:49883"/>
        <label>2</label>
    </ligand>
</feature>
<feature type="binding site" evidence="2">
    <location>
        <position position="51"/>
    </location>
    <ligand>
        <name>[4Fe-4S] cluster</name>
        <dbReference type="ChEBI" id="CHEBI:49883"/>
        <label>2</label>
    </ligand>
</feature>
<feature type="binding site" evidence="2">
    <location>
        <position position="54"/>
    </location>
    <ligand>
        <name>[4Fe-4S] cluster</name>
        <dbReference type="ChEBI" id="CHEBI:49883"/>
        <label>2</label>
    </ligand>
</feature>
<feature type="binding site" evidence="2">
    <location>
        <position position="58"/>
    </location>
    <ligand>
        <name>[4Fe-4S] cluster</name>
        <dbReference type="ChEBI" id="CHEBI:49883"/>
        <label>1</label>
    </ligand>
</feature>
<reference key="1">
    <citation type="journal article" date="2007" name="PLoS Genet.">
        <title>Patterns and implications of gene gain and loss in the evolution of Prochlorococcus.</title>
        <authorList>
            <person name="Kettler G.C."/>
            <person name="Martiny A.C."/>
            <person name="Huang K."/>
            <person name="Zucker J."/>
            <person name="Coleman M.L."/>
            <person name="Rodrigue S."/>
            <person name="Chen F."/>
            <person name="Lapidus A."/>
            <person name="Ferriera S."/>
            <person name="Johnson J."/>
            <person name="Steglich C."/>
            <person name="Church G.M."/>
            <person name="Richardson P."/>
            <person name="Chisholm S.W."/>
        </authorList>
    </citation>
    <scope>NUCLEOTIDE SEQUENCE [LARGE SCALE GENOMIC DNA]</scope>
    <source>
        <strain>MIT 9303</strain>
    </source>
</reference>
<accession>A2CCX5</accession>
<sequence>MSHAVKIYDTCIGCTQCVRACPLDVLEMVPWDGHKSGQIAASPRTEDCVGCKRCETACPTDFLSIRVYLGDETTRSMGLAY</sequence>
<comment type="function">
    <text evidence="2">Apoprotein for the two 4Fe-4S centers FA and FB of photosystem I (PSI); essential for photochemical activity. FB is the terminal electron acceptor of PSI, donating electrons to ferredoxin. The C-terminus interacts with PsaA/B/D and helps assemble the protein into the PSI complex. Required for binding of PsaD and PsaE to PSI. PSI is a plastocyanin/cytochrome c6-ferredoxin oxidoreductase, converting photonic excitation into a charge separation, which transfers an electron from the donor P700 chlorophyll pair to the spectroscopically characterized acceptors A0, A1, FX, FA and FB in turn.</text>
</comment>
<comment type="catalytic activity">
    <reaction evidence="2">
        <text>reduced [plastocyanin] + hnu + oxidized [2Fe-2S]-[ferredoxin] = oxidized [plastocyanin] + reduced [2Fe-2S]-[ferredoxin]</text>
        <dbReference type="Rhea" id="RHEA:30407"/>
        <dbReference type="Rhea" id="RHEA-COMP:10000"/>
        <dbReference type="Rhea" id="RHEA-COMP:10001"/>
        <dbReference type="Rhea" id="RHEA-COMP:10039"/>
        <dbReference type="Rhea" id="RHEA-COMP:10040"/>
        <dbReference type="ChEBI" id="CHEBI:29036"/>
        <dbReference type="ChEBI" id="CHEBI:30212"/>
        <dbReference type="ChEBI" id="CHEBI:33737"/>
        <dbReference type="ChEBI" id="CHEBI:33738"/>
        <dbReference type="ChEBI" id="CHEBI:49552"/>
        <dbReference type="EC" id="1.97.1.12"/>
    </reaction>
</comment>
<comment type="cofactor">
    <cofactor evidence="2">
        <name>[4Fe-4S] cluster</name>
        <dbReference type="ChEBI" id="CHEBI:49883"/>
    </cofactor>
    <text evidence="2">Binds 2 [4Fe-4S] clusters. Cluster 2 is most probably the spectroscopically characterized electron acceptor FA and cluster 1 is most probably FB.</text>
</comment>
<comment type="subunit">
    <text evidence="2">The cyanobacterial PSI reaction center is composed of one copy each of PsaA,B,C,D,E,F,I,J,K,L,M and X, and forms trimeric complexes.</text>
</comment>
<comment type="subcellular location">
    <subcellularLocation>
        <location evidence="2">Cellular thylakoid membrane</location>
        <topology evidence="2">Peripheral membrane protein</topology>
        <orientation evidence="2">Cytoplasmic side</orientation>
    </subcellularLocation>
</comment>
<evidence type="ECO:0000250" key="1"/>
<evidence type="ECO:0000255" key="2">
    <source>
        <dbReference type="HAMAP-Rule" id="MF_01303"/>
    </source>
</evidence>
<organism>
    <name type="scientific">Prochlorococcus marinus (strain MIT 9303)</name>
    <dbReference type="NCBI Taxonomy" id="59922"/>
    <lineage>
        <taxon>Bacteria</taxon>
        <taxon>Bacillati</taxon>
        <taxon>Cyanobacteriota</taxon>
        <taxon>Cyanophyceae</taxon>
        <taxon>Synechococcales</taxon>
        <taxon>Prochlorococcaceae</taxon>
        <taxon>Prochlorococcus</taxon>
    </lineage>
</organism>
<name>PSAC_PROM3</name>
<gene>
    <name evidence="2" type="primary">psaC</name>
    <name type="ordered locus">P9303_26051</name>
</gene>
<protein>
    <recommendedName>
        <fullName evidence="2">Photosystem I iron-sulfur center</fullName>
        <ecNumber evidence="2">1.97.1.12</ecNumber>
    </recommendedName>
    <alternativeName>
        <fullName evidence="2">9 kDa polypeptide</fullName>
    </alternativeName>
    <alternativeName>
        <fullName evidence="2">PSI-C</fullName>
    </alternativeName>
    <alternativeName>
        <fullName evidence="2">Photosystem I subunit VII</fullName>
    </alternativeName>
    <alternativeName>
        <fullName evidence="2">PsaC</fullName>
    </alternativeName>
</protein>